<organism>
    <name type="scientific">Viscum album</name>
    <name type="common">European mistletoe</name>
    <dbReference type="NCBI Taxonomy" id="3972"/>
    <lineage>
        <taxon>Eukaryota</taxon>
        <taxon>Viridiplantae</taxon>
        <taxon>Streptophyta</taxon>
        <taxon>Embryophyta</taxon>
        <taxon>Tracheophyta</taxon>
        <taxon>Spermatophyta</taxon>
        <taxon>Magnoliopsida</taxon>
        <taxon>eudicotyledons</taxon>
        <taxon>Gunneridae</taxon>
        <taxon>Pentapetalae</taxon>
        <taxon>Santalales</taxon>
        <taxon>Viscaceae</taxon>
        <taxon>Viscum</taxon>
    </lineage>
</organism>
<name>ML3_VISAL</name>
<proteinExistence type="evidence at protein level"/>
<sequence length="569" mass="62686">MNAVMDSRGAWVSCFLILGLVFGATVKAETKFSYERLRLRVTHQTTGDEYFRFITLLRDYVSSGSFSNEIPLLRQSTIPVSDAQRFVLVELTNQGGDSITAAIDVTNLYVVAYQAGDQSYFLRDAPDGAERHLFTGTTRSSLPFTGSYTDLERYAGHRDQIPLGIEELIQSVSALRYPGGSTRAQARSIIILIQMISEAARFNPIFWRVRQDINSGESFLPDMYMLELETSWGQQSTQVQQSTDGVFNNPFRLAISTGNFVTLSNVRDVIASLAIMLFVCRDRPSSSEVRYWPLVIRPVLENSGAVDDVTCTASEPTVRIVGRDGLCVDVRDGKFHNGNPIQLSPCKSNTDPNQLWTIRRDGTIRSNGRCLTTYGYTAGVYVMIFDCNTAVREATLWQIWGNGTIINPRSNLVLGAASGSSGTTLTVQTQVYSLGQGWLAGNDTAPREVTIYGFRDLCMEANGASVWVETCGSSTENQNWALYGDGSIRPKQNQDQCLTCQGDSVATVINIVSCSAGSSGQRWVFTNEGTILNLNNGLVMDVAQSNPSLRRIIIYPATGNPNQMWLPVP</sequence>
<evidence type="ECO:0000250" key="1"/>
<evidence type="ECO:0000255" key="2">
    <source>
        <dbReference type="PROSITE-ProRule" id="PRU00174"/>
    </source>
</evidence>
<evidence type="ECO:0000269" key="3">
    <source>
    </source>
</evidence>
<evidence type="ECO:0000269" key="4">
    <source>
    </source>
</evidence>
<evidence type="ECO:0000269" key="5">
    <source>
    </source>
</evidence>
<evidence type="ECO:0000269" key="6">
    <source>
    </source>
</evidence>
<evidence type="ECO:0000269" key="7">
    <source>
    </source>
</evidence>
<evidence type="ECO:0000305" key="8"/>
<dbReference type="EC" id="3.2.2.22"/>
<dbReference type="EMBL" id="AY377892">
    <property type="protein sequence ID" value="AAR25547.1"/>
    <property type="molecule type" value="Genomic_DNA"/>
</dbReference>
<dbReference type="EMBL" id="AY377893">
    <property type="protein sequence ID" value="AAR25548.1"/>
    <property type="molecule type" value="mRNA"/>
</dbReference>
<dbReference type="EMBL" id="AY081148">
    <property type="protein sequence ID" value="AAL87005.1"/>
    <property type="molecule type" value="mRNA"/>
</dbReference>
<dbReference type="SMR" id="P82683"/>
<dbReference type="CAZy" id="CBM13">
    <property type="family name" value="Carbohydrate-Binding Module Family 13"/>
</dbReference>
<dbReference type="iPTMnet" id="P82683"/>
<dbReference type="GO" id="GO:0030246">
    <property type="term" value="F:carbohydrate binding"/>
    <property type="evidence" value="ECO:0007669"/>
    <property type="project" value="UniProtKB-KW"/>
</dbReference>
<dbReference type="GO" id="GO:0030598">
    <property type="term" value="F:rRNA N-glycosylase activity"/>
    <property type="evidence" value="ECO:0007669"/>
    <property type="project" value="UniProtKB-EC"/>
</dbReference>
<dbReference type="GO" id="GO:0090729">
    <property type="term" value="F:toxin activity"/>
    <property type="evidence" value="ECO:0007669"/>
    <property type="project" value="UniProtKB-KW"/>
</dbReference>
<dbReference type="GO" id="GO:0006952">
    <property type="term" value="P:defense response"/>
    <property type="evidence" value="ECO:0007669"/>
    <property type="project" value="UniProtKB-KW"/>
</dbReference>
<dbReference type="GO" id="GO:0017148">
    <property type="term" value="P:negative regulation of translation"/>
    <property type="evidence" value="ECO:0007669"/>
    <property type="project" value="UniProtKB-KW"/>
</dbReference>
<dbReference type="CDD" id="cd23485">
    <property type="entry name" value="beta-trefoil_Ricin_MLs_rpt1"/>
    <property type="match status" value="1"/>
</dbReference>
<dbReference type="CDD" id="cd23492">
    <property type="entry name" value="beta-trefoil_Ricin_MLs_rpt2"/>
    <property type="match status" value="1"/>
</dbReference>
<dbReference type="FunFam" id="2.80.10.50:FF:000076">
    <property type="entry name" value="Beta-galactoside-specific lectin 1"/>
    <property type="match status" value="1"/>
</dbReference>
<dbReference type="Gene3D" id="2.80.10.50">
    <property type="match status" value="2"/>
</dbReference>
<dbReference type="Gene3D" id="3.40.420.10">
    <property type="entry name" value="Ricin (A subunit), domain 1"/>
    <property type="match status" value="1"/>
</dbReference>
<dbReference type="Gene3D" id="4.10.470.10">
    <property type="entry name" value="Ricin (A Subunit), domain 2"/>
    <property type="match status" value="1"/>
</dbReference>
<dbReference type="InterPro" id="IPR036041">
    <property type="entry name" value="Ribosome-inact_prot_sf"/>
</dbReference>
<dbReference type="InterPro" id="IPR017989">
    <property type="entry name" value="Ribosome_inactivat_1/2"/>
</dbReference>
<dbReference type="InterPro" id="IPR001574">
    <property type="entry name" value="Ribosome_inactivat_prot"/>
</dbReference>
<dbReference type="InterPro" id="IPR016138">
    <property type="entry name" value="Ribosome_inactivat_prot_sub1"/>
</dbReference>
<dbReference type="InterPro" id="IPR016139">
    <property type="entry name" value="Ribosome_inactivat_prot_sub2"/>
</dbReference>
<dbReference type="InterPro" id="IPR035992">
    <property type="entry name" value="Ricin_B-like_lectins"/>
</dbReference>
<dbReference type="InterPro" id="IPR000772">
    <property type="entry name" value="Ricin_B_lectin"/>
</dbReference>
<dbReference type="PANTHER" id="PTHR33453">
    <property type="match status" value="1"/>
</dbReference>
<dbReference type="PANTHER" id="PTHR33453:SF34">
    <property type="entry name" value="RIBOSOME-INACTIVATING PROTEIN"/>
    <property type="match status" value="1"/>
</dbReference>
<dbReference type="Pfam" id="PF00652">
    <property type="entry name" value="Ricin_B_lectin"/>
    <property type="match status" value="2"/>
</dbReference>
<dbReference type="Pfam" id="PF00161">
    <property type="entry name" value="RIP"/>
    <property type="match status" value="1"/>
</dbReference>
<dbReference type="PRINTS" id="PR00396">
    <property type="entry name" value="SHIGARICIN"/>
</dbReference>
<dbReference type="SMART" id="SM00458">
    <property type="entry name" value="RICIN"/>
    <property type="match status" value="2"/>
</dbReference>
<dbReference type="SUPFAM" id="SSF56371">
    <property type="entry name" value="Ribosome inactivating proteins (RIP)"/>
    <property type="match status" value="1"/>
</dbReference>
<dbReference type="SUPFAM" id="SSF50370">
    <property type="entry name" value="Ricin B-like lectins"/>
    <property type="match status" value="2"/>
</dbReference>
<dbReference type="PROSITE" id="PS50231">
    <property type="entry name" value="RICIN_B_LECTIN"/>
    <property type="match status" value="2"/>
</dbReference>
<keyword id="KW-0903">Direct protein sequencing</keyword>
<keyword id="KW-1015">Disulfide bond</keyword>
<keyword id="KW-0325">Glycoprotein</keyword>
<keyword id="KW-0378">Hydrolase</keyword>
<keyword id="KW-0430">Lectin</keyword>
<keyword id="KW-0611">Plant defense</keyword>
<keyword id="KW-0652">Protein synthesis inhibitor</keyword>
<keyword id="KW-0677">Repeat</keyword>
<keyword id="KW-0732">Signal</keyword>
<keyword id="KW-0800">Toxin</keyword>
<accession>P82683</accession>
<accession>P87800</accession>
<accession>Q6H268</accession>
<accession>Q6H269</accession>
<accession>Q8RXH7</accession>
<accession>Q9S7D0</accession>
<protein>
    <recommendedName>
        <fullName>Beta-galactoside-specific lectin 3</fullName>
    </recommendedName>
    <alternativeName>
        <fullName>Beta-galactoside-specific lectin II</fullName>
    </alternativeName>
    <alternativeName>
        <fullName>Beta-galactoside-specific lectin III</fullName>
    </alternativeName>
    <component>
        <recommendedName>
            <fullName>Beta-galactoside-specific lectin 3 chain A isoform 1</fullName>
            <ecNumber>3.2.2.22</ecNumber>
        </recommendedName>
        <alternativeName>
            <fullName>Beta-galactoside-specific lectin III chain A isoform 1</fullName>
        </alternativeName>
        <alternativeName>
            <fullName>Lectin chain A isoform 2</fullName>
        </alternativeName>
        <alternativeName>
            <fullName>ML-3 A</fullName>
        </alternativeName>
        <alternativeName>
            <fullName>ML-III A</fullName>
        </alternativeName>
        <alternativeName>
            <fullName>rRNA N-glycosidase</fullName>
        </alternativeName>
    </component>
    <component>
        <recommendedName>
            <fullName>Beta-galactoside-specific lectin 3 chain B</fullName>
        </recommendedName>
        <alternativeName>
            <fullName>Beta-galactoside-specific lectin III chain B</fullName>
        </alternativeName>
        <alternativeName>
            <fullName>ML-3 B</fullName>
        </alternativeName>
        <alternativeName>
            <fullName>ML-III B</fullName>
        </alternativeName>
    </component>
</protein>
<feature type="signal peptide" evidence="3 4 5">
    <location>
        <begin position="1"/>
        <end position="33"/>
    </location>
</feature>
<feature type="chain" id="PRO_0000221393" description="Beta-galactoside-specific lectin 3 chain A isoform 1">
    <location>
        <begin position="34"/>
        <end position="287"/>
    </location>
</feature>
<feature type="propeptide" id="PRO_0000284729" description="Connecting peptide" evidence="7">
    <location>
        <begin position="288"/>
        <end position="307"/>
    </location>
</feature>
<feature type="chain" id="PRO_0000221394" description="Beta-galactoside-specific lectin 3 chain B">
    <location>
        <begin position="308"/>
        <end position="569"/>
    </location>
</feature>
<feature type="domain" description="Ricin B-type lectin 1" evidence="2">
    <location>
        <begin position="314"/>
        <end position="441"/>
    </location>
</feature>
<feature type="domain" description="Ricin B-type lectin 2" evidence="2">
    <location>
        <begin position="445"/>
        <end position="568"/>
    </location>
</feature>
<feature type="active site" evidence="1">
    <location>
        <position position="198"/>
    </location>
</feature>
<feature type="binding site">
    <location>
        <begin position="329"/>
        <end position="331"/>
    </location>
    <ligand>
        <name>D-galactose</name>
        <dbReference type="ChEBI" id="CHEBI:4139"/>
    </ligand>
</feature>
<feature type="binding site">
    <location>
        <begin position="541"/>
        <end position="543"/>
    </location>
    <ligand>
        <name>D-galactose</name>
        <dbReference type="ChEBI" id="CHEBI:4139"/>
    </ligand>
</feature>
<feature type="glycosylation site" description="N-linked (GlcNAc...) asparagine" evidence="7">
    <location>
        <position position="402"/>
    </location>
</feature>
<feature type="glycosylation site" description="N-linked (GlcNAc...) asparagine" evidence="7">
    <location>
        <position position="442"/>
    </location>
</feature>
<feature type="disulfide bond" description="Interchain (between A and B chains)" evidence="8">
    <location>
        <begin position="280"/>
        <end position="311"/>
    </location>
</feature>
<feature type="disulfide bond" evidence="2">
    <location>
        <begin position="327"/>
        <end position="346"/>
    </location>
</feature>
<feature type="disulfide bond" evidence="2">
    <location>
        <begin position="370"/>
        <end position="387"/>
    </location>
</feature>
<feature type="disulfide bond" evidence="2">
    <location>
        <begin position="458"/>
        <end position="471"/>
    </location>
</feature>
<feature type="disulfide bond" evidence="2">
    <location>
        <begin position="497"/>
        <end position="514"/>
    </location>
</feature>
<feature type="sequence variant" evidence="5">
    <original>D</original>
    <variation>R</variation>
    <location>
        <position position="127"/>
    </location>
</feature>
<feature type="sequence variant" evidence="5">
    <original>R</original>
    <variation>T</variation>
    <location>
        <position position="131"/>
    </location>
</feature>
<feature type="sequence variant" evidence="5">
    <original>T</original>
    <variation>A</variation>
    <location>
        <position position="138"/>
    </location>
</feature>
<feature type="sequence variant" evidence="7">
    <original>I</original>
    <variation>F</variation>
    <location>
        <position position="358"/>
    </location>
</feature>
<feature type="sequence variant" evidence="7">
    <original>Q</original>
    <variation>L</variation>
    <location>
        <position position="430"/>
    </location>
</feature>
<feature type="sequence variant" evidence="7">
    <original>P</original>
    <variation>F</variation>
    <location>
        <position position="569"/>
    </location>
</feature>
<feature type="sequence conflict" description="In Ref. 1; AAR25548." evidence="8" ref="1">
    <original>G</original>
    <variation>R</variation>
    <location>
        <position position="9"/>
    </location>
</feature>
<feature type="sequence conflict" description="In Ref. 1; AAR25548." evidence="8" ref="1">
    <original>I</original>
    <variation>M</variation>
    <location>
        <position position="17"/>
    </location>
</feature>
<feature type="sequence conflict" description="In Ref. 1; AAR25548." evidence="8" ref="1">
    <original>A</original>
    <variation>R</variation>
    <location>
        <position position="24"/>
    </location>
</feature>
<feature type="sequence conflict" description="In Ref. 3; AA sequence and 4; AA sequence." evidence="8" ref="3 4">
    <original>D</original>
    <variation>E</variation>
    <location>
        <position position="48"/>
    </location>
</feature>
<feature type="sequence conflict" description="In Ref. 4; AA sequence." evidence="8" ref="4">
    <original>S</original>
    <variation>G</variation>
    <location>
        <position position="62"/>
    </location>
</feature>
<feature type="sequence conflict" description="In Ref. 3; AAL87005." evidence="8" ref="3">
    <original>Q</original>
    <variation>E</variation>
    <location>
        <position position="94"/>
    </location>
</feature>
<feature type="sequence conflict" description="In Ref. 2; AA sequence." evidence="8" ref="2">
    <original>D</original>
    <variation>N</variation>
    <location>
        <position position="127"/>
    </location>
</feature>
<feature type="sequence conflict" description="In Ref. 2; AA sequence." evidence="8" ref="2">
    <original>I</original>
    <variation>L</variation>
    <location>
        <position position="190"/>
    </location>
</feature>
<feature type="sequence conflict" description="In Ref. 1; AAR25548." evidence="8" ref="1">
    <original>I</original>
    <variation>V</variation>
    <location>
        <position position="191"/>
    </location>
</feature>
<feature type="sequence conflict" description="In Ref. 1; AAR25548." evidence="8" ref="1">
    <original>D</original>
    <variation>Y</variation>
    <location>
        <position position="244"/>
    </location>
</feature>
<feature type="sequence conflict" description="In Ref. 2; AA sequence and 3; AAL87005." evidence="8" ref="2 3">
    <original>RD</original>
    <variation>GE</variation>
    <location>
        <begin position="281"/>
        <end position="282"/>
    </location>
</feature>
<feature type="sequence conflict" description="In Ref. 1; AAR25548 and 5; AA sequence." evidence="8" ref="1 5">
    <original>T</original>
    <variation>K</variation>
    <location>
        <position position="475"/>
    </location>
</feature>
<feature type="sequence conflict" description="In Ref. 5; AA sequence." evidence="8" ref="5">
    <original>N</original>
    <variation>D</variation>
    <location>
        <position position="479"/>
    </location>
</feature>
<feature type="sequence conflict" description="In Ref. 1; AAR25548." evidence="8" ref="1">
    <original>C</original>
    <variation>S</variation>
    <location>
        <position position="500"/>
    </location>
</feature>
<feature type="sequence conflict" description="In Ref. 1; AAR25548 and 5; AA sequence." evidence="8" ref="1 5">
    <original>A</original>
    <variation>S</variation>
    <location>
        <position position="506"/>
    </location>
</feature>
<feature type="sequence conflict" description="In Ref. 1; AAR25548." evidence="8" ref="1">
    <original>N</original>
    <variation>K</variation>
    <location>
        <position position="535"/>
    </location>
</feature>
<feature type="sequence conflict" description="In Ref. 1; AAR25548." evidence="8" ref="1">
    <original>V</original>
    <variation>L</variation>
    <location>
        <position position="568"/>
    </location>
</feature>
<reference key="1">
    <citation type="journal article" date="2004" name="Eur. J. Biochem.">
        <title>Cloning and characterization of the genes encoding toxic lectins in mistletoe (Viscum album L).</title>
        <authorList>
            <person name="Kourmanova A.G."/>
            <person name="Soudarkina O.J."/>
            <person name="Olsnes S."/>
            <person name="Kozlov J.V."/>
        </authorList>
    </citation>
    <scope>NUCLEOTIDE SEQUENCE [GENOMIC DNA / MRNA]</scope>
    <scope>FUNCTION</scope>
    <source>
        <tissue>Leaf</tissue>
    </source>
</reference>
<reference key="2">
    <citation type="journal article" date="2004" name="J. Pept. Sci.">
        <title>Complete structure determination of the A chain of mistletoe lectin III from Viscum album L. ssp. album.</title>
        <authorList>
            <person name="Wacker R."/>
            <person name="Stoeva S."/>
            <person name="Pfuller K."/>
            <person name="Pfuller U."/>
            <person name="Voelter W."/>
        </authorList>
    </citation>
    <scope>PROTEIN SEQUENCE OF 34-287</scope>
    <scope>VARIANTS ARG-127; THR-131 AND ALA-138</scope>
</reference>
<reference key="3">
    <citation type="journal article" date="2004" name="Arch. Biochem. Biophys.">
        <title>Purification and characterization of four isoforms of Himalayan mistletoe ribosome-inactivating protein from Viscum album having unique sugar affinity.</title>
        <authorList>
            <person name="Mishra V."/>
            <person name="Sharma R.S."/>
            <person name="Yadav S."/>
            <person name="Babu C.R."/>
            <person name="Singh T.P."/>
        </authorList>
    </citation>
    <scope>NUCLEOTIDE SEQUENCE [MRNA] OF 34-282</scope>
    <scope>PROTEIN SEQUENCE OF 34-53</scope>
    <scope>FUNCTION</scope>
    <source>
        <tissue>Leaf</tissue>
    </source>
</reference>
<reference key="4">
    <citation type="journal article" date="1992" name="Anticancer Drugs">
        <title>Identity of the N-terminal sequences of the three A chains of mistletoe (Viscum album L.) lectins: homology with ricin-like plant toxins and single-chain ribosome-inhibiting proteins.</title>
        <authorList>
            <person name="Dietrich J.B."/>
            <person name="Ribereau-Gayon G."/>
            <person name="Jung M.L."/>
            <person name="Franz H."/>
            <person name="Beck J.P."/>
            <person name="Anton R."/>
        </authorList>
    </citation>
    <scope>PROTEIN SEQUENCE OF 34-62</scope>
    <scope>FUNCTION</scope>
</reference>
<reference key="5">
    <citation type="journal article" date="2005" name="J. Pept. Sci.">
        <title>Complete structure determination of N-acetyl-D-galactosamine-binding mistletoe lectin-3 from Viscum album L. album.</title>
        <authorList>
            <person name="Wacker R."/>
            <person name="Stoeva S."/>
            <person name="Betzel C."/>
            <person name="Voelter W."/>
        </authorList>
    </citation>
    <scope>PROTEIN SEQUENCE OF 308-569</scope>
    <scope>VARIANTS PHE-358; LEU-430 AND PHE-569</scope>
    <scope>GLYCOSYLATION AT ASN-402 AND ASN-442</scope>
    <source>
        <tissue>Leaf</tissue>
    </source>
</reference>
<comment type="function">
    <text evidence="3 4 6">The A chain is responsible for inhibiting protein synthesis through the catalytic inactivation of 60S ribosomal subunits by removing adenine from position 4,324 of 28S rRNA. The B chain binds to cell receptors and probably facilitates the entry into the cell of the A chain; B chains are also responsible for cell agglutination (lectin activity). Inhibits growth of the human tumor cell line Molt4.</text>
</comment>
<comment type="catalytic activity">
    <reaction>
        <text>Endohydrolysis of the N-glycosidic bond at one specific adenosine on the 28S rRNA.</text>
        <dbReference type="EC" id="3.2.2.22"/>
    </reaction>
</comment>
<comment type="subunit">
    <text>Disulfide-linked dimer of A and B chains.</text>
</comment>
<comment type="miscellaneous">
    <text>Several isoforms exist.</text>
</comment>
<comment type="similarity">
    <text evidence="8">Belongs to the ribosome-inactivating protein family. Type 2 RIP subfamily.</text>
</comment>